<dbReference type="EMBL" id="ABSU01000004">
    <property type="protein sequence ID" value="EFE35151.1"/>
    <property type="molecule type" value="Genomic_DNA"/>
</dbReference>
<dbReference type="RefSeq" id="XP_003015796.1">
    <property type="nucleotide sequence ID" value="XM_003015750.1"/>
</dbReference>
<dbReference type="SMR" id="D4APE0"/>
<dbReference type="STRING" id="663331.D4APE0"/>
<dbReference type="GeneID" id="9526078"/>
<dbReference type="KEGG" id="abe:ARB_06108"/>
<dbReference type="eggNOG" id="ENOG502SBZ4">
    <property type="taxonomic scope" value="Eukaryota"/>
</dbReference>
<dbReference type="HOGENOM" id="CLU_088616_0_0_1"/>
<dbReference type="OMA" id="DYDHKDY"/>
<dbReference type="OrthoDB" id="4174256at2759"/>
<dbReference type="Proteomes" id="UP000008866">
    <property type="component" value="Unassembled WGS sequence"/>
</dbReference>
<dbReference type="GO" id="GO:0005576">
    <property type="term" value="C:extracellular region"/>
    <property type="evidence" value="ECO:0007669"/>
    <property type="project" value="UniProtKB-SubCell"/>
</dbReference>
<dbReference type="CDD" id="cd23507">
    <property type="entry name" value="hydrophobin_I"/>
    <property type="match status" value="1"/>
</dbReference>
<gene>
    <name type="ORF">ARB_06108</name>
</gene>
<name>A6108_ARTBC</name>
<sequence length="212" mass="24168">MQLTQVLAVAILAAGVSAGHRPHRPHSNKLEIQDIKCQSGAPYCCSPDKTKGSTCTKLTGSSVNCDSVVVCCNNNGDKHSPQTCSASVAHPITFVDVDAKFRIDHNKVSHNRVNAKQRRDDKKDYGKNDYGKKDYGKKDYGKKDYGKKEYDPKDHKDYDHKDYDHKDYGHKDYGHKDYGHKDYGHKDYGHDDYGYKGYDDKDYGYKGYDDYY</sequence>
<keyword id="KW-1185">Reference proteome</keyword>
<keyword id="KW-0677">Repeat</keyword>
<keyword id="KW-0964">Secreted</keyword>
<keyword id="KW-0732">Signal</keyword>
<accession>D4APE0</accession>
<comment type="subcellular location">
    <subcellularLocation>
        <location evidence="3">Secreted</location>
    </subcellularLocation>
</comment>
<protein>
    <recommendedName>
        <fullName>Uncharacterized secreted protein ARB_06108</fullName>
    </recommendedName>
</protein>
<reference key="1">
    <citation type="journal article" date="2011" name="Genome Biol.">
        <title>Comparative and functional genomics provide insights into the pathogenicity of dermatophytic fungi.</title>
        <authorList>
            <person name="Burmester A."/>
            <person name="Shelest E."/>
            <person name="Gloeckner G."/>
            <person name="Heddergott C."/>
            <person name="Schindler S."/>
            <person name="Staib P."/>
            <person name="Heidel A."/>
            <person name="Felder M."/>
            <person name="Petzold A."/>
            <person name="Szafranski K."/>
            <person name="Feuermann M."/>
            <person name="Pedruzzi I."/>
            <person name="Priebe S."/>
            <person name="Groth M."/>
            <person name="Winkler R."/>
            <person name="Li W."/>
            <person name="Kniemeyer O."/>
            <person name="Schroeckh V."/>
            <person name="Hertweck C."/>
            <person name="Hube B."/>
            <person name="White T.C."/>
            <person name="Platzer M."/>
            <person name="Guthke R."/>
            <person name="Heitman J."/>
            <person name="Woestemeyer J."/>
            <person name="Zipfel P.F."/>
            <person name="Monod M."/>
            <person name="Brakhage A.A."/>
        </authorList>
    </citation>
    <scope>NUCLEOTIDE SEQUENCE [LARGE SCALE GENOMIC DNA]</scope>
    <source>
        <strain>ATCC MYA-4681 / CBS 112371</strain>
    </source>
</reference>
<reference key="2">
    <citation type="journal article" date="2011" name="Proteomics">
        <title>Identification of novel secreted proteases during extracellular proteolysis by dermatophytes at acidic pH.</title>
        <authorList>
            <person name="Sriranganadane D."/>
            <person name="Waridel P."/>
            <person name="Salamin K."/>
            <person name="Feuermann M."/>
            <person name="Mignon B."/>
            <person name="Staib P."/>
            <person name="Neuhaus J.M."/>
            <person name="Quadroni M."/>
            <person name="Monod M."/>
        </authorList>
    </citation>
    <scope>IDENTIFICATION BY MASS SPECTROMETRY</scope>
    <scope>SUBCELLULAR LOCATION</scope>
</reference>
<feature type="signal peptide" evidence="1">
    <location>
        <begin position="1"/>
        <end position="18"/>
    </location>
</feature>
<feature type="chain" id="PRO_5003053560" description="Uncharacterized secreted protein ARB_06108">
    <location>
        <begin position="19"/>
        <end position="212"/>
    </location>
</feature>
<feature type="repeat" description="1" evidence="4">
    <location>
        <begin position="123"/>
        <end position="127"/>
    </location>
</feature>
<feature type="repeat" description="2; truncated" evidence="4">
    <location>
        <begin position="128"/>
        <end position="132"/>
    </location>
</feature>
<feature type="repeat" description="3" evidence="4">
    <location>
        <begin position="133"/>
        <end position="137"/>
    </location>
</feature>
<feature type="repeat" description="4" evidence="4">
    <location>
        <begin position="138"/>
        <end position="142"/>
    </location>
</feature>
<feature type="repeat" description="5" evidence="4">
    <location>
        <begin position="143"/>
        <end position="147"/>
    </location>
</feature>
<feature type="repeat" description="6; truncated" evidence="4">
    <location>
        <begin position="148"/>
        <end position="152"/>
    </location>
</feature>
<feature type="repeat" description="7" evidence="4">
    <location>
        <begin position="166"/>
        <end position="170"/>
    </location>
</feature>
<feature type="repeat" description="8" evidence="4">
    <location>
        <begin position="171"/>
        <end position="175"/>
    </location>
</feature>
<feature type="repeat" description="9" evidence="4">
    <location>
        <begin position="176"/>
        <end position="180"/>
    </location>
</feature>
<feature type="repeat" description="10" evidence="4">
    <location>
        <begin position="181"/>
        <end position="185"/>
    </location>
</feature>
<feature type="repeat" description="11" evidence="4">
    <location>
        <begin position="186"/>
        <end position="190"/>
    </location>
</feature>
<feature type="repeat" description="12; truncated" evidence="4">
    <location>
        <begin position="191"/>
        <end position="195"/>
    </location>
</feature>
<feature type="repeat" description="13; truncated" evidence="4">
    <location>
        <begin position="196"/>
        <end position="200"/>
    </location>
</feature>
<feature type="repeat" description="14; truncated" evidence="4">
    <location>
        <begin position="201"/>
        <end position="205"/>
    </location>
</feature>
<feature type="repeat" description="15; truncated" evidence="4">
    <location>
        <begin position="206"/>
        <end position="210"/>
    </location>
</feature>
<feature type="region of interest" description="Disordered" evidence="2">
    <location>
        <begin position="108"/>
        <end position="180"/>
    </location>
</feature>
<feature type="region of interest" description="15 X 5 AA tandem repeats of K-D-Y-G-H" evidence="4">
    <location>
        <begin position="120"/>
        <end position="210"/>
    </location>
</feature>
<feature type="compositionally biased region" description="Basic and acidic residues" evidence="2">
    <location>
        <begin position="117"/>
        <end position="180"/>
    </location>
</feature>
<evidence type="ECO:0000255" key="1"/>
<evidence type="ECO:0000256" key="2">
    <source>
        <dbReference type="SAM" id="MobiDB-lite"/>
    </source>
</evidence>
<evidence type="ECO:0000269" key="3">
    <source>
    </source>
</evidence>
<evidence type="ECO:0000305" key="4"/>
<organism>
    <name type="scientific">Arthroderma benhamiae (strain ATCC MYA-4681 / CBS 112371)</name>
    <name type="common">Trichophyton mentagrophytes</name>
    <dbReference type="NCBI Taxonomy" id="663331"/>
    <lineage>
        <taxon>Eukaryota</taxon>
        <taxon>Fungi</taxon>
        <taxon>Dikarya</taxon>
        <taxon>Ascomycota</taxon>
        <taxon>Pezizomycotina</taxon>
        <taxon>Eurotiomycetes</taxon>
        <taxon>Eurotiomycetidae</taxon>
        <taxon>Onygenales</taxon>
        <taxon>Arthrodermataceae</taxon>
        <taxon>Trichophyton</taxon>
    </lineage>
</organism>
<proteinExistence type="evidence at protein level"/>